<evidence type="ECO:0000255" key="1">
    <source>
        <dbReference type="HAMAP-Rule" id="MF_00523"/>
    </source>
</evidence>
<sequence length="348" mass="36534">MGKTLKEVAEYLGGRVIGDENAVVGGLGTLDDAGEGQITFLANPKYAQKVATTRATAVILPPGAPGHGRNVIEVSNPYLAFAKLLTLFYVAPPKALGVMDGAVIGQGVAMGKDISIYPGAHVADGVKMGDRVTLYPGVVLYPGVELGSDVTLHANVVVRERCRIGNRVTVHSGTVIGTDGFGYAPDGKDWYKIPQIGIVILEDDVEIGSNAVIDRAALEATIIGRGTKIDNLVQIAHNCVIGENCMIVSQVGISGSTKVGNHVTMGGQVGVAGHIQIGDNVMVGAKSGVPGNIPANQIVSGIPAFAHRDWLKASSVFPRLPEHRKTLASLEKRVQELEEKLKADEKVK</sequence>
<reference key="1">
    <citation type="submission" date="2009-01" db="EMBL/GenBank/DDBJ databases">
        <title>Complete sequence of Geobacter sp. FRC-32.</title>
        <authorList>
            <consortium name="US DOE Joint Genome Institute"/>
            <person name="Lucas S."/>
            <person name="Copeland A."/>
            <person name="Lapidus A."/>
            <person name="Glavina del Rio T."/>
            <person name="Dalin E."/>
            <person name="Tice H."/>
            <person name="Bruce D."/>
            <person name="Goodwin L."/>
            <person name="Pitluck S."/>
            <person name="Saunders E."/>
            <person name="Brettin T."/>
            <person name="Detter J.C."/>
            <person name="Han C."/>
            <person name="Larimer F."/>
            <person name="Land M."/>
            <person name="Hauser L."/>
            <person name="Kyrpides N."/>
            <person name="Ovchinnikova G."/>
            <person name="Kostka J."/>
            <person name="Richardson P."/>
        </authorList>
    </citation>
    <scope>NUCLEOTIDE SEQUENCE [LARGE SCALE GENOMIC DNA]</scope>
    <source>
        <strain>DSM 22248 / JCM 15807 / FRC-32</strain>
    </source>
</reference>
<dbReference type="EC" id="2.3.1.191" evidence="1"/>
<dbReference type="EMBL" id="CP001390">
    <property type="protein sequence ID" value="ACM20454.1"/>
    <property type="molecule type" value="Genomic_DNA"/>
</dbReference>
<dbReference type="RefSeq" id="WP_012647183.1">
    <property type="nucleotide sequence ID" value="NC_011979.1"/>
</dbReference>
<dbReference type="SMR" id="B9M8V8"/>
<dbReference type="STRING" id="316067.Geob_2099"/>
<dbReference type="KEGG" id="geo:Geob_2099"/>
<dbReference type="eggNOG" id="COG1044">
    <property type="taxonomic scope" value="Bacteria"/>
</dbReference>
<dbReference type="HOGENOM" id="CLU_049865_0_0_7"/>
<dbReference type="OrthoDB" id="9784739at2"/>
<dbReference type="UniPathway" id="UPA00973"/>
<dbReference type="Proteomes" id="UP000007721">
    <property type="component" value="Chromosome"/>
</dbReference>
<dbReference type="GO" id="GO:0016020">
    <property type="term" value="C:membrane"/>
    <property type="evidence" value="ECO:0007669"/>
    <property type="project" value="GOC"/>
</dbReference>
<dbReference type="GO" id="GO:0016410">
    <property type="term" value="F:N-acyltransferase activity"/>
    <property type="evidence" value="ECO:0007669"/>
    <property type="project" value="InterPro"/>
</dbReference>
<dbReference type="GO" id="GO:0009245">
    <property type="term" value="P:lipid A biosynthetic process"/>
    <property type="evidence" value="ECO:0007669"/>
    <property type="project" value="UniProtKB-UniRule"/>
</dbReference>
<dbReference type="CDD" id="cd03352">
    <property type="entry name" value="LbH_LpxD"/>
    <property type="match status" value="1"/>
</dbReference>
<dbReference type="Gene3D" id="2.160.10.10">
    <property type="entry name" value="Hexapeptide repeat proteins"/>
    <property type="match status" value="1"/>
</dbReference>
<dbReference type="Gene3D" id="3.40.1390.10">
    <property type="entry name" value="MurE/MurF, N-terminal domain"/>
    <property type="match status" value="1"/>
</dbReference>
<dbReference type="HAMAP" id="MF_00523">
    <property type="entry name" value="LpxD"/>
    <property type="match status" value="1"/>
</dbReference>
<dbReference type="InterPro" id="IPR001451">
    <property type="entry name" value="Hexapep"/>
</dbReference>
<dbReference type="InterPro" id="IPR007691">
    <property type="entry name" value="LpxD"/>
</dbReference>
<dbReference type="InterPro" id="IPR011004">
    <property type="entry name" value="Trimer_LpxA-like_sf"/>
</dbReference>
<dbReference type="InterPro" id="IPR020573">
    <property type="entry name" value="UDP_GlcNAc_AcTrfase_non-rep"/>
</dbReference>
<dbReference type="NCBIfam" id="TIGR01853">
    <property type="entry name" value="lipid_A_lpxD"/>
    <property type="match status" value="1"/>
</dbReference>
<dbReference type="NCBIfam" id="NF002060">
    <property type="entry name" value="PRK00892.1"/>
    <property type="match status" value="1"/>
</dbReference>
<dbReference type="PANTHER" id="PTHR43378">
    <property type="entry name" value="UDP-3-O-ACYLGLUCOSAMINE N-ACYLTRANSFERASE"/>
    <property type="match status" value="1"/>
</dbReference>
<dbReference type="PANTHER" id="PTHR43378:SF2">
    <property type="entry name" value="UDP-3-O-ACYLGLUCOSAMINE N-ACYLTRANSFERASE 1, MITOCHONDRIAL-RELATED"/>
    <property type="match status" value="1"/>
</dbReference>
<dbReference type="Pfam" id="PF00132">
    <property type="entry name" value="Hexapep"/>
    <property type="match status" value="2"/>
</dbReference>
<dbReference type="Pfam" id="PF14602">
    <property type="entry name" value="Hexapep_2"/>
    <property type="match status" value="1"/>
</dbReference>
<dbReference type="Pfam" id="PF04613">
    <property type="entry name" value="LpxD"/>
    <property type="match status" value="1"/>
</dbReference>
<dbReference type="SUPFAM" id="SSF51161">
    <property type="entry name" value="Trimeric LpxA-like enzymes"/>
    <property type="match status" value="1"/>
</dbReference>
<comment type="function">
    <text evidence="1">Catalyzes the N-acylation of UDP-3-O-acylglucosamine using 3-hydroxyacyl-ACP as the acyl donor. Is involved in the biosynthesis of lipid A, a phosphorylated glycolipid that anchors the lipopolysaccharide to the outer membrane of the cell.</text>
</comment>
<comment type="catalytic activity">
    <reaction evidence="1">
        <text>a UDP-3-O-[(3R)-3-hydroxyacyl]-alpha-D-glucosamine + a (3R)-hydroxyacyl-[ACP] = a UDP-2-N,3-O-bis[(3R)-3-hydroxyacyl]-alpha-D-glucosamine + holo-[ACP] + H(+)</text>
        <dbReference type="Rhea" id="RHEA:53836"/>
        <dbReference type="Rhea" id="RHEA-COMP:9685"/>
        <dbReference type="Rhea" id="RHEA-COMP:9945"/>
        <dbReference type="ChEBI" id="CHEBI:15378"/>
        <dbReference type="ChEBI" id="CHEBI:64479"/>
        <dbReference type="ChEBI" id="CHEBI:78827"/>
        <dbReference type="ChEBI" id="CHEBI:137740"/>
        <dbReference type="ChEBI" id="CHEBI:137748"/>
        <dbReference type="EC" id="2.3.1.191"/>
    </reaction>
</comment>
<comment type="pathway">
    <text evidence="1">Bacterial outer membrane biogenesis; LPS lipid A biosynthesis.</text>
</comment>
<comment type="subunit">
    <text evidence="1">Homotrimer.</text>
</comment>
<comment type="similarity">
    <text evidence="1">Belongs to the transferase hexapeptide repeat family. LpxD subfamily.</text>
</comment>
<name>LPXD_GEODF</name>
<accession>B9M8V8</accession>
<organism>
    <name type="scientific">Geotalea daltonii (strain DSM 22248 / JCM 15807 / FRC-32)</name>
    <name type="common">Geobacter daltonii</name>
    <dbReference type="NCBI Taxonomy" id="316067"/>
    <lineage>
        <taxon>Bacteria</taxon>
        <taxon>Pseudomonadati</taxon>
        <taxon>Thermodesulfobacteriota</taxon>
        <taxon>Desulfuromonadia</taxon>
        <taxon>Geobacterales</taxon>
        <taxon>Geobacteraceae</taxon>
        <taxon>Geotalea</taxon>
    </lineage>
</organism>
<proteinExistence type="inferred from homology"/>
<gene>
    <name evidence="1" type="primary">lpxD</name>
    <name type="ordered locus">Geob_2099</name>
</gene>
<feature type="chain" id="PRO_1000190894" description="UDP-3-O-acylglucosamine N-acyltransferase">
    <location>
        <begin position="1"/>
        <end position="348"/>
    </location>
</feature>
<feature type="active site" description="Proton acceptor" evidence="1">
    <location>
        <position position="237"/>
    </location>
</feature>
<protein>
    <recommendedName>
        <fullName evidence="1">UDP-3-O-acylglucosamine N-acyltransferase</fullName>
        <ecNumber evidence="1">2.3.1.191</ecNumber>
    </recommendedName>
</protein>
<keyword id="KW-0012">Acyltransferase</keyword>
<keyword id="KW-0441">Lipid A biosynthesis</keyword>
<keyword id="KW-0444">Lipid biosynthesis</keyword>
<keyword id="KW-0443">Lipid metabolism</keyword>
<keyword id="KW-1185">Reference proteome</keyword>
<keyword id="KW-0677">Repeat</keyword>
<keyword id="KW-0808">Transferase</keyword>